<organism>
    <name type="scientific">Desulforudis audaxviator (strain MP104C)</name>
    <dbReference type="NCBI Taxonomy" id="477974"/>
    <lineage>
        <taxon>Bacteria</taxon>
        <taxon>Bacillati</taxon>
        <taxon>Bacillota</taxon>
        <taxon>Clostridia</taxon>
        <taxon>Thermoanaerobacterales</taxon>
        <taxon>Candidatus Desulforudaceae</taxon>
        <taxon>Candidatus Desulforudis</taxon>
    </lineage>
</organism>
<feature type="chain" id="PRO_1000115736" description="1-deoxy-D-xylulose-5-phosphate synthase">
    <location>
        <begin position="1"/>
        <end position="634"/>
    </location>
</feature>
<feature type="binding site" evidence="1">
    <location>
        <position position="73"/>
    </location>
    <ligand>
        <name>thiamine diphosphate</name>
        <dbReference type="ChEBI" id="CHEBI:58937"/>
    </ligand>
</feature>
<feature type="binding site" evidence="1">
    <location>
        <begin position="114"/>
        <end position="116"/>
    </location>
    <ligand>
        <name>thiamine diphosphate</name>
        <dbReference type="ChEBI" id="CHEBI:58937"/>
    </ligand>
</feature>
<feature type="binding site" evidence="1">
    <location>
        <position position="145"/>
    </location>
    <ligand>
        <name>Mg(2+)</name>
        <dbReference type="ChEBI" id="CHEBI:18420"/>
    </ligand>
</feature>
<feature type="binding site" evidence="1">
    <location>
        <begin position="146"/>
        <end position="147"/>
    </location>
    <ligand>
        <name>thiamine diphosphate</name>
        <dbReference type="ChEBI" id="CHEBI:58937"/>
    </ligand>
</feature>
<feature type="binding site" evidence="1">
    <location>
        <position position="174"/>
    </location>
    <ligand>
        <name>Mg(2+)</name>
        <dbReference type="ChEBI" id="CHEBI:18420"/>
    </ligand>
</feature>
<feature type="binding site" evidence="1">
    <location>
        <position position="174"/>
    </location>
    <ligand>
        <name>thiamine diphosphate</name>
        <dbReference type="ChEBI" id="CHEBI:58937"/>
    </ligand>
</feature>
<feature type="binding site" evidence="1">
    <location>
        <position position="285"/>
    </location>
    <ligand>
        <name>thiamine diphosphate</name>
        <dbReference type="ChEBI" id="CHEBI:58937"/>
    </ligand>
</feature>
<feature type="binding site" evidence="1">
    <location>
        <position position="365"/>
    </location>
    <ligand>
        <name>thiamine diphosphate</name>
        <dbReference type="ChEBI" id="CHEBI:58937"/>
    </ligand>
</feature>
<protein>
    <recommendedName>
        <fullName evidence="1">1-deoxy-D-xylulose-5-phosphate synthase</fullName>
        <ecNumber evidence="1">2.2.1.7</ecNumber>
    </recommendedName>
    <alternativeName>
        <fullName evidence="1">1-deoxyxylulose-5-phosphate synthase</fullName>
        <shortName evidence="1">DXP synthase</shortName>
        <shortName evidence="1">DXPS</shortName>
    </alternativeName>
</protein>
<comment type="function">
    <text evidence="1">Catalyzes the acyloin condensation reaction between C atoms 2 and 3 of pyruvate and glyceraldehyde 3-phosphate to yield 1-deoxy-D-xylulose-5-phosphate (DXP).</text>
</comment>
<comment type="catalytic activity">
    <reaction evidence="1">
        <text>D-glyceraldehyde 3-phosphate + pyruvate + H(+) = 1-deoxy-D-xylulose 5-phosphate + CO2</text>
        <dbReference type="Rhea" id="RHEA:12605"/>
        <dbReference type="ChEBI" id="CHEBI:15361"/>
        <dbReference type="ChEBI" id="CHEBI:15378"/>
        <dbReference type="ChEBI" id="CHEBI:16526"/>
        <dbReference type="ChEBI" id="CHEBI:57792"/>
        <dbReference type="ChEBI" id="CHEBI:59776"/>
        <dbReference type="EC" id="2.2.1.7"/>
    </reaction>
</comment>
<comment type="cofactor">
    <cofactor evidence="1">
        <name>Mg(2+)</name>
        <dbReference type="ChEBI" id="CHEBI:18420"/>
    </cofactor>
    <text evidence="1">Binds 1 Mg(2+) ion per subunit.</text>
</comment>
<comment type="cofactor">
    <cofactor evidence="1">
        <name>thiamine diphosphate</name>
        <dbReference type="ChEBI" id="CHEBI:58937"/>
    </cofactor>
    <text evidence="1">Binds 1 thiamine pyrophosphate per subunit.</text>
</comment>
<comment type="pathway">
    <text evidence="1">Metabolic intermediate biosynthesis; 1-deoxy-D-xylulose 5-phosphate biosynthesis; 1-deoxy-D-xylulose 5-phosphate from D-glyceraldehyde 3-phosphate and pyruvate: step 1/1.</text>
</comment>
<comment type="subunit">
    <text evidence="1">Homodimer.</text>
</comment>
<comment type="similarity">
    <text evidence="1">Belongs to the transketolase family. DXPS subfamily.</text>
</comment>
<gene>
    <name evidence="1" type="primary">dxs</name>
    <name type="ordered locus">Daud_1027</name>
</gene>
<sequence>MGLLDGISHLTDLRALTPDQLDELAAELRDLIVSTVSRTGGHLAPNLGVVELTLALHYVFRAPDDRIVWDVGHQCYVHKILTGRKSQFHTLRQFEGLSGFPNRNESEYDCFGTGHSSTSISAALGMALARDLSGEDRNVVAVIGDGALSGGMAFEALNQAGHLGCRLIVVLNDNEMSIARNVGAMARYLSRLRTDPMYSRSKDEVESLLRRIPAIGPRVLGWIERIKDSLKYLVVAGMLFEELGFTYLGPIDGHNIPAMLNVFRQAQAVEGPVLVHVLTKKGKGYAPAEKNPDKFHGVGPFDPATGNTPTDARVSFTEVFGRTLVQLAEADSRILAITAAMTSGTGLGPFSRRFPQRFFDVGIAEQHAVTLAAGLAVEGYRPVVAIYSTFLQRAYDQVLHDVCLQKLPVVFALDRGGIVGEDGVTHQGVFDFSFLRPVPNLVMMAPKDENEFQHMLKTAVEHEGPIAVRYPRGTGTGCALDQDLVALPIGRAEVLREGDDITLIAIGNMVPTAVKAAEILAERGIEASVVNARFVKPLDEKCICHYARRTGRLITLEENVIAGGFGSAVQELLVAKGLTDVRVQLIGLPDVFIEHGAPHLLRAKYGLTVDRVVRTAESEKRKRARLKLAPRLLR</sequence>
<keyword id="KW-0414">Isoprene biosynthesis</keyword>
<keyword id="KW-0460">Magnesium</keyword>
<keyword id="KW-0479">Metal-binding</keyword>
<keyword id="KW-1185">Reference proteome</keyword>
<keyword id="KW-0784">Thiamine biosynthesis</keyword>
<keyword id="KW-0786">Thiamine pyrophosphate</keyword>
<keyword id="KW-0808">Transferase</keyword>
<accession>B1I3J6</accession>
<evidence type="ECO:0000255" key="1">
    <source>
        <dbReference type="HAMAP-Rule" id="MF_00315"/>
    </source>
</evidence>
<proteinExistence type="inferred from homology"/>
<name>DXS_DESAP</name>
<dbReference type="EC" id="2.2.1.7" evidence="1"/>
<dbReference type="EMBL" id="CP000860">
    <property type="protein sequence ID" value="ACA59539.1"/>
    <property type="molecule type" value="Genomic_DNA"/>
</dbReference>
<dbReference type="RefSeq" id="WP_012302125.1">
    <property type="nucleotide sequence ID" value="NC_010424.1"/>
</dbReference>
<dbReference type="SMR" id="B1I3J6"/>
<dbReference type="STRING" id="477974.Daud_1027"/>
<dbReference type="KEGG" id="dau:Daud_1027"/>
<dbReference type="eggNOG" id="COG1154">
    <property type="taxonomic scope" value="Bacteria"/>
</dbReference>
<dbReference type="HOGENOM" id="CLU_009227_1_4_9"/>
<dbReference type="OrthoDB" id="9803371at2"/>
<dbReference type="UniPathway" id="UPA00064">
    <property type="reaction ID" value="UER00091"/>
</dbReference>
<dbReference type="Proteomes" id="UP000008544">
    <property type="component" value="Chromosome"/>
</dbReference>
<dbReference type="GO" id="GO:0005829">
    <property type="term" value="C:cytosol"/>
    <property type="evidence" value="ECO:0007669"/>
    <property type="project" value="TreeGrafter"/>
</dbReference>
<dbReference type="GO" id="GO:0008661">
    <property type="term" value="F:1-deoxy-D-xylulose-5-phosphate synthase activity"/>
    <property type="evidence" value="ECO:0007669"/>
    <property type="project" value="UniProtKB-UniRule"/>
</dbReference>
<dbReference type="GO" id="GO:0000287">
    <property type="term" value="F:magnesium ion binding"/>
    <property type="evidence" value="ECO:0007669"/>
    <property type="project" value="UniProtKB-UniRule"/>
</dbReference>
<dbReference type="GO" id="GO:0030976">
    <property type="term" value="F:thiamine pyrophosphate binding"/>
    <property type="evidence" value="ECO:0007669"/>
    <property type="project" value="UniProtKB-UniRule"/>
</dbReference>
<dbReference type="GO" id="GO:0052865">
    <property type="term" value="P:1-deoxy-D-xylulose 5-phosphate biosynthetic process"/>
    <property type="evidence" value="ECO:0007669"/>
    <property type="project" value="UniProtKB-UniPathway"/>
</dbReference>
<dbReference type="GO" id="GO:0019288">
    <property type="term" value="P:isopentenyl diphosphate biosynthetic process, methylerythritol 4-phosphate pathway"/>
    <property type="evidence" value="ECO:0007669"/>
    <property type="project" value="TreeGrafter"/>
</dbReference>
<dbReference type="GO" id="GO:0016114">
    <property type="term" value="P:terpenoid biosynthetic process"/>
    <property type="evidence" value="ECO:0007669"/>
    <property type="project" value="UniProtKB-UniRule"/>
</dbReference>
<dbReference type="GO" id="GO:0009228">
    <property type="term" value="P:thiamine biosynthetic process"/>
    <property type="evidence" value="ECO:0007669"/>
    <property type="project" value="UniProtKB-UniRule"/>
</dbReference>
<dbReference type="CDD" id="cd02007">
    <property type="entry name" value="TPP_DXS"/>
    <property type="match status" value="1"/>
</dbReference>
<dbReference type="CDD" id="cd07033">
    <property type="entry name" value="TPP_PYR_DXS_TK_like"/>
    <property type="match status" value="1"/>
</dbReference>
<dbReference type="FunFam" id="3.40.50.920:FF:000002">
    <property type="entry name" value="1-deoxy-D-xylulose-5-phosphate synthase"/>
    <property type="match status" value="1"/>
</dbReference>
<dbReference type="FunFam" id="3.40.50.970:FF:000005">
    <property type="entry name" value="1-deoxy-D-xylulose-5-phosphate synthase"/>
    <property type="match status" value="1"/>
</dbReference>
<dbReference type="Gene3D" id="3.40.50.920">
    <property type="match status" value="1"/>
</dbReference>
<dbReference type="Gene3D" id="3.40.50.970">
    <property type="match status" value="2"/>
</dbReference>
<dbReference type="HAMAP" id="MF_00315">
    <property type="entry name" value="DXP_synth"/>
    <property type="match status" value="1"/>
</dbReference>
<dbReference type="InterPro" id="IPR005477">
    <property type="entry name" value="Dxylulose-5-P_synthase"/>
</dbReference>
<dbReference type="InterPro" id="IPR029061">
    <property type="entry name" value="THDP-binding"/>
</dbReference>
<dbReference type="InterPro" id="IPR009014">
    <property type="entry name" value="Transketo_C/PFOR_II"/>
</dbReference>
<dbReference type="InterPro" id="IPR005475">
    <property type="entry name" value="Transketolase-like_Pyr-bd"/>
</dbReference>
<dbReference type="InterPro" id="IPR033248">
    <property type="entry name" value="Transketolase_C"/>
</dbReference>
<dbReference type="InterPro" id="IPR049557">
    <property type="entry name" value="Transketolase_CS"/>
</dbReference>
<dbReference type="NCBIfam" id="TIGR00204">
    <property type="entry name" value="dxs"/>
    <property type="match status" value="1"/>
</dbReference>
<dbReference type="NCBIfam" id="NF003933">
    <property type="entry name" value="PRK05444.2-2"/>
    <property type="match status" value="1"/>
</dbReference>
<dbReference type="PANTHER" id="PTHR43322">
    <property type="entry name" value="1-D-DEOXYXYLULOSE 5-PHOSPHATE SYNTHASE-RELATED"/>
    <property type="match status" value="1"/>
</dbReference>
<dbReference type="PANTHER" id="PTHR43322:SF5">
    <property type="entry name" value="1-DEOXY-D-XYLULOSE-5-PHOSPHATE SYNTHASE, CHLOROPLASTIC"/>
    <property type="match status" value="1"/>
</dbReference>
<dbReference type="Pfam" id="PF13292">
    <property type="entry name" value="DXP_synthase_N"/>
    <property type="match status" value="1"/>
</dbReference>
<dbReference type="Pfam" id="PF02779">
    <property type="entry name" value="Transket_pyr"/>
    <property type="match status" value="1"/>
</dbReference>
<dbReference type="Pfam" id="PF02780">
    <property type="entry name" value="Transketolase_C"/>
    <property type="match status" value="1"/>
</dbReference>
<dbReference type="SMART" id="SM00861">
    <property type="entry name" value="Transket_pyr"/>
    <property type="match status" value="1"/>
</dbReference>
<dbReference type="SUPFAM" id="SSF52518">
    <property type="entry name" value="Thiamin diphosphate-binding fold (THDP-binding)"/>
    <property type="match status" value="2"/>
</dbReference>
<dbReference type="SUPFAM" id="SSF52922">
    <property type="entry name" value="TK C-terminal domain-like"/>
    <property type="match status" value="1"/>
</dbReference>
<dbReference type="PROSITE" id="PS00801">
    <property type="entry name" value="TRANSKETOLASE_1"/>
    <property type="match status" value="1"/>
</dbReference>
<reference key="1">
    <citation type="submission" date="2007-10" db="EMBL/GenBank/DDBJ databases">
        <title>Complete sequence of chromosome of Desulforudis audaxviator MP104C.</title>
        <authorList>
            <person name="Copeland A."/>
            <person name="Lucas S."/>
            <person name="Lapidus A."/>
            <person name="Barry K."/>
            <person name="Glavina del Rio T."/>
            <person name="Dalin E."/>
            <person name="Tice H."/>
            <person name="Bruce D."/>
            <person name="Pitluck S."/>
            <person name="Lowry S.R."/>
            <person name="Larimer F."/>
            <person name="Land M.L."/>
            <person name="Hauser L."/>
            <person name="Kyrpides N."/>
            <person name="Ivanova N.N."/>
            <person name="Richardson P."/>
        </authorList>
    </citation>
    <scope>NUCLEOTIDE SEQUENCE [LARGE SCALE GENOMIC DNA]</scope>
    <source>
        <strain>MP104C</strain>
    </source>
</reference>